<name>SYR_PROMM</name>
<protein>
    <recommendedName>
        <fullName evidence="1">Arginine--tRNA ligase</fullName>
        <ecNumber evidence="1">6.1.1.19</ecNumber>
    </recommendedName>
    <alternativeName>
        <fullName evidence="1">Arginyl-tRNA synthetase</fullName>
        <shortName evidence="1">ArgRS</shortName>
    </alternativeName>
</protein>
<reference key="1">
    <citation type="journal article" date="2003" name="Nature">
        <title>Genome divergence in two Prochlorococcus ecotypes reflects oceanic niche differentiation.</title>
        <authorList>
            <person name="Rocap G."/>
            <person name="Larimer F.W."/>
            <person name="Lamerdin J.E."/>
            <person name="Malfatti S."/>
            <person name="Chain P."/>
            <person name="Ahlgren N.A."/>
            <person name="Arellano A."/>
            <person name="Coleman M."/>
            <person name="Hauser L."/>
            <person name="Hess W.R."/>
            <person name="Johnson Z.I."/>
            <person name="Land M.L."/>
            <person name="Lindell D."/>
            <person name="Post A.F."/>
            <person name="Regala W."/>
            <person name="Shah M."/>
            <person name="Shaw S.L."/>
            <person name="Steglich C."/>
            <person name="Sullivan M.B."/>
            <person name="Ting C.S."/>
            <person name="Tolonen A."/>
            <person name="Webb E.A."/>
            <person name="Zinser E.R."/>
            <person name="Chisholm S.W."/>
        </authorList>
    </citation>
    <scope>NUCLEOTIDE SEQUENCE [LARGE SCALE GENOMIC DNA]</scope>
    <source>
        <strain>MIT 9313</strain>
    </source>
</reference>
<comment type="catalytic activity">
    <reaction evidence="1">
        <text>tRNA(Arg) + L-arginine + ATP = L-arginyl-tRNA(Arg) + AMP + diphosphate</text>
        <dbReference type="Rhea" id="RHEA:20301"/>
        <dbReference type="Rhea" id="RHEA-COMP:9658"/>
        <dbReference type="Rhea" id="RHEA-COMP:9673"/>
        <dbReference type="ChEBI" id="CHEBI:30616"/>
        <dbReference type="ChEBI" id="CHEBI:32682"/>
        <dbReference type="ChEBI" id="CHEBI:33019"/>
        <dbReference type="ChEBI" id="CHEBI:78442"/>
        <dbReference type="ChEBI" id="CHEBI:78513"/>
        <dbReference type="ChEBI" id="CHEBI:456215"/>
        <dbReference type="EC" id="6.1.1.19"/>
    </reaction>
</comment>
<comment type="subunit">
    <text evidence="1">Monomer.</text>
</comment>
<comment type="subcellular location">
    <subcellularLocation>
        <location evidence="1">Cytoplasm</location>
    </subcellularLocation>
</comment>
<comment type="similarity">
    <text evidence="1">Belongs to the class-I aminoacyl-tRNA synthetase family.</text>
</comment>
<proteinExistence type="inferred from homology"/>
<sequence length="612" mass="67430">MQAHFASEFMLSLAHALESQLRAAIDRAFPEAAASARESGTGLDPQLAPASKPEFGDFQANAALPLAKPLKQPPRQIAAAIVDQLMVDTAFTAICLTPEIAGPGFINLTVRPECLAAEVQARLADARLGVPLVEGDNDGQQPTPVVVDFSSPNIAKEMHVGHLRSTIIGDSLARVLEFRGHPVLRLNHVGDWGTQFGMLITHLKQVAPEALETADAVDLGDLVVFYRQAKQRFDDDEAFQTTSREEVVKLQGGDPISLKAWSLLCDQSRREFQKIYDRLDVRLNERGESFYNAYLESVVEDLNVSGLLVSDDGAQCVFLEGVTGKDGKPLPVIVQKSDGGFNYATTDLAAMRYRFAAPPQGDGARRVIYVTDAGQANHFAGVFQVAQRAGWIPDAGRLQHVPFGLVQGEDGKKLKTRAGDTVRLRELLDEAVERAESDLRRRLQEEGRDEDESFIEQVATTVGLAAVKYADLSQNRITNYQFSFDRMLALQGNTAPYLLYAVVRIAGIARKGGDLDVTTAELQFSETQEWALVRELLKFDAVIAEVEEELLPNRLCTYLFELSQVFNRFYDQVPVLKAEQPSRSCRLALCRLTADTLKLGLSLLGIPTLERM</sequence>
<organism>
    <name type="scientific">Prochlorococcus marinus (strain MIT 9313)</name>
    <dbReference type="NCBI Taxonomy" id="74547"/>
    <lineage>
        <taxon>Bacteria</taxon>
        <taxon>Bacillati</taxon>
        <taxon>Cyanobacteriota</taxon>
        <taxon>Cyanophyceae</taxon>
        <taxon>Synechococcales</taxon>
        <taxon>Prochlorococcaceae</taxon>
        <taxon>Prochlorococcus</taxon>
    </lineage>
</organism>
<accession>Q7V493</accession>
<keyword id="KW-0030">Aminoacyl-tRNA synthetase</keyword>
<keyword id="KW-0067">ATP-binding</keyword>
<keyword id="KW-0963">Cytoplasm</keyword>
<keyword id="KW-0436">Ligase</keyword>
<keyword id="KW-0547">Nucleotide-binding</keyword>
<keyword id="KW-0648">Protein biosynthesis</keyword>
<keyword id="KW-1185">Reference proteome</keyword>
<evidence type="ECO:0000255" key="1">
    <source>
        <dbReference type="HAMAP-Rule" id="MF_00123"/>
    </source>
</evidence>
<feature type="chain" id="PRO_0000151590" description="Arginine--tRNA ligase">
    <location>
        <begin position="1"/>
        <end position="612"/>
    </location>
</feature>
<feature type="short sequence motif" description="'HIGH' region">
    <location>
        <begin position="152"/>
        <end position="162"/>
    </location>
</feature>
<gene>
    <name evidence="1" type="primary">argS</name>
    <name type="ordered locus">PMT_2070</name>
</gene>
<dbReference type="EC" id="6.1.1.19" evidence="1"/>
<dbReference type="EMBL" id="BX548175">
    <property type="protein sequence ID" value="CAE22244.1"/>
    <property type="molecule type" value="Genomic_DNA"/>
</dbReference>
<dbReference type="SMR" id="Q7V493"/>
<dbReference type="KEGG" id="pmt:PMT_2070"/>
<dbReference type="eggNOG" id="COG0018">
    <property type="taxonomic scope" value="Bacteria"/>
</dbReference>
<dbReference type="HOGENOM" id="CLU_006406_5_1_3"/>
<dbReference type="Proteomes" id="UP000001423">
    <property type="component" value="Chromosome"/>
</dbReference>
<dbReference type="GO" id="GO:0005737">
    <property type="term" value="C:cytoplasm"/>
    <property type="evidence" value="ECO:0007669"/>
    <property type="project" value="UniProtKB-SubCell"/>
</dbReference>
<dbReference type="GO" id="GO:0004814">
    <property type="term" value="F:arginine-tRNA ligase activity"/>
    <property type="evidence" value="ECO:0007669"/>
    <property type="project" value="UniProtKB-UniRule"/>
</dbReference>
<dbReference type="GO" id="GO:0005524">
    <property type="term" value="F:ATP binding"/>
    <property type="evidence" value="ECO:0007669"/>
    <property type="project" value="UniProtKB-UniRule"/>
</dbReference>
<dbReference type="GO" id="GO:0006420">
    <property type="term" value="P:arginyl-tRNA aminoacylation"/>
    <property type="evidence" value="ECO:0007669"/>
    <property type="project" value="UniProtKB-UniRule"/>
</dbReference>
<dbReference type="CDD" id="cd07956">
    <property type="entry name" value="Anticodon_Ia_Arg"/>
    <property type="match status" value="1"/>
</dbReference>
<dbReference type="CDD" id="cd00671">
    <property type="entry name" value="ArgRS_core"/>
    <property type="match status" value="1"/>
</dbReference>
<dbReference type="FunFam" id="3.40.50.620:FF:000030">
    <property type="entry name" value="Arginine--tRNA ligase"/>
    <property type="match status" value="1"/>
</dbReference>
<dbReference type="FunFam" id="1.10.730.10:FF:000006">
    <property type="entry name" value="Arginyl-tRNA synthetase 2, mitochondrial"/>
    <property type="match status" value="1"/>
</dbReference>
<dbReference type="Gene3D" id="3.30.1360.70">
    <property type="entry name" value="Arginyl tRNA synthetase N-terminal domain"/>
    <property type="match status" value="1"/>
</dbReference>
<dbReference type="Gene3D" id="3.40.50.620">
    <property type="entry name" value="HUPs"/>
    <property type="match status" value="1"/>
</dbReference>
<dbReference type="Gene3D" id="1.10.730.10">
    <property type="entry name" value="Isoleucyl-tRNA Synthetase, Domain 1"/>
    <property type="match status" value="1"/>
</dbReference>
<dbReference type="HAMAP" id="MF_00123">
    <property type="entry name" value="Arg_tRNA_synth"/>
    <property type="match status" value="1"/>
</dbReference>
<dbReference type="InterPro" id="IPR001412">
    <property type="entry name" value="aa-tRNA-synth_I_CS"/>
</dbReference>
<dbReference type="InterPro" id="IPR001278">
    <property type="entry name" value="Arg-tRNA-ligase"/>
</dbReference>
<dbReference type="InterPro" id="IPR005148">
    <property type="entry name" value="Arg-tRNA-synth_N"/>
</dbReference>
<dbReference type="InterPro" id="IPR036695">
    <property type="entry name" value="Arg-tRNA-synth_N_sf"/>
</dbReference>
<dbReference type="InterPro" id="IPR035684">
    <property type="entry name" value="ArgRS_core"/>
</dbReference>
<dbReference type="InterPro" id="IPR008909">
    <property type="entry name" value="DALR_anticod-bd"/>
</dbReference>
<dbReference type="InterPro" id="IPR014729">
    <property type="entry name" value="Rossmann-like_a/b/a_fold"/>
</dbReference>
<dbReference type="InterPro" id="IPR009080">
    <property type="entry name" value="tRNAsynth_Ia_anticodon-bd"/>
</dbReference>
<dbReference type="NCBIfam" id="TIGR00456">
    <property type="entry name" value="argS"/>
    <property type="match status" value="1"/>
</dbReference>
<dbReference type="PANTHER" id="PTHR11956:SF5">
    <property type="entry name" value="ARGININE--TRNA LIGASE, CYTOPLASMIC"/>
    <property type="match status" value="1"/>
</dbReference>
<dbReference type="PANTHER" id="PTHR11956">
    <property type="entry name" value="ARGINYL-TRNA SYNTHETASE"/>
    <property type="match status" value="1"/>
</dbReference>
<dbReference type="Pfam" id="PF03485">
    <property type="entry name" value="Arg_tRNA_synt_N"/>
    <property type="match status" value="1"/>
</dbReference>
<dbReference type="Pfam" id="PF05746">
    <property type="entry name" value="DALR_1"/>
    <property type="match status" value="1"/>
</dbReference>
<dbReference type="Pfam" id="PF00750">
    <property type="entry name" value="tRNA-synt_1d"/>
    <property type="match status" value="1"/>
</dbReference>
<dbReference type="PRINTS" id="PR01038">
    <property type="entry name" value="TRNASYNTHARG"/>
</dbReference>
<dbReference type="SMART" id="SM01016">
    <property type="entry name" value="Arg_tRNA_synt_N"/>
    <property type="match status" value="1"/>
</dbReference>
<dbReference type="SMART" id="SM00836">
    <property type="entry name" value="DALR_1"/>
    <property type="match status" value="1"/>
</dbReference>
<dbReference type="SUPFAM" id="SSF47323">
    <property type="entry name" value="Anticodon-binding domain of a subclass of class I aminoacyl-tRNA synthetases"/>
    <property type="match status" value="1"/>
</dbReference>
<dbReference type="SUPFAM" id="SSF55190">
    <property type="entry name" value="Arginyl-tRNA synthetase (ArgRS), N-terminal 'additional' domain"/>
    <property type="match status" value="1"/>
</dbReference>
<dbReference type="SUPFAM" id="SSF52374">
    <property type="entry name" value="Nucleotidylyl transferase"/>
    <property type="match status" value="1"/>
</dbReference>
<dbReference type="PROSITE" id="PS00178">
    <property type="entry name" value="AA_TRNA_LIGASE_I"/>
    <property type="match status" value="1"/>
</dbReference>